<name>PSCE_PSEAE</name>
<keyword id="KW-0002">3D-structure</keyword>
<keyword id="KW-0175">Coiled coil</keyword>
<keyword id="KW-0963">Cytoplasm</keyword>
<keyword id="KW-1185">Reference proteome</keyword>
<keyword id="KW-0843">Virulence</keyword>
<reference key="1">
    <citation type="journal article" date="1996" name="Mol. Microbiol.">
        <title>Exoenzyme S of Pseudomonas aeruginosa is secreted by a type III pathway.</title>
        <authorList>
            <person name="Yahr T.L."/>
            <person name="Goranson J."/>
            <person name="Frank D.W."/>
        </authorList>
    </citation>
    <scope>NUCLEOTIDE SEQUENCE [GENOMIC DNA]</scope>
    <source>
        <strain>388</strain>
    </source>
</reference>
<reference key="2">
    <citation type="journal article" date="2000" name="Nature">
        <title>Complete genome sequence of Pseudomonas aeruginosa PAO1, an opportunistic pathogen.</title>
        <authorList>
            <person name="Stover C.K."/>
            <person name="Pham X.-Q.T."/>
            <person name="Erwin A.L."/>
            <person name="Mizoguchi S.D."/>
            <person name="Warrener P."/>
            <person name="Hickey M.J."/>
            <person name="Brinkman F.S.L."/>
            <person name="Hufnagle W.O."/>
            <person name="Kowalik D.J."/>
            <person name="Lagrou M."/>
            <person name="Garber R.L."/>
            <person name="Goltry L."/>
            <person name="Tolentino E."/>
            <person name="Westbrock-Wadman S."/>
            <person name="Yuan Y."/>
            <person name="Brody L.L."/>
            <person name="Coulter S.N."/>
            <person name="Folger K.R."/>
            <person name="Kas A."/>
            <person name="Larbig K."/>
            <person name="Lim R.M."/>
            <person name="Smith K.A."/>
            <person name="Spencer D.H."/>
            <person name="Wong G.K.-S."/>
            <person name="Wu Z."/>
            <person name="Paulsen I.T."/>
            <person name="Reizer J."/>
            <person name="Saier M.H. Jr."/>
            <person name="Hancock R.E.W."/>
            <person name="Lory S."/>
            <person name="Olson M.V."/>
        </authorList>
    </citation>
    <scope>NUCLEOTIDE SEQUENCE [LARGE SCALE GENOMIC DNA]</scope>
    <source>
        <strain>ATCC 15692 / DSM 22644 / CIP 104116 / JCM 14847 / LMG 12228 / 1C / PRS 101 / PAO1</strain>
    </source>
</reference>
<reference key="3">
    <citation type="journal article" date="2005" name="J. Biol. Chem.">
        <title>The PscE-PscF-PscG complex controls type III secretion needle biogenesis in Pseudomonas aeruginosa.</title>
        <authorList>
            <person name="Quinaud M."/>
            <person name="Chabert J."/>
            <person name="Faudry E."/>
            <person name="Neumann E."/>
            <person name="Lemaire D."/>
            <person name="Pastor A."/>
            <person name="Elsen S."/>
            <person name="Dessen A."/>
            <person name="Attree I."/>
        </authorList>
    </citation>
    <scope>FUNCTION</scope>
    <scope>SUBUNIT</scope>
    <scope>SUBCELLULAR LOCATION</scope>
    <source>
        <strain>CHA</strain>
    </source>
</reference>
<reference key="4">
    <citation type="journal article" date="2010" name="J. Bacteriol.">
        <title>Cochaperone interactions in export of the type III needle component PscF of Pseudomonas aeruginosa.</title>
        <authorList>
            <person name="Ple S."/>
            <person name="Job V."/>
            <person name="Dessen A."/>
            <person name="Attree I."/>
        </authorList>
    </citation>
    <scope>FUNCTION</scope>
    <scope>INTERACTION WITH PSCG</scope>
    <scope>MUTAGENESIS OF LEU-20; LEU-24 AND GLY-57</scope>
    <scope>DISRUPTION PHENOTYPE</scope>
</reference>
<reference evidence="5" key="5">
    <citation type="journal article" date="2007" name="Proc. Natl. Acad. Sci. U.S.A.">
        <title>Structure of the heterotrimeric complex that regulates type III secretion needle formation.</title>
        <authorList>
            <person name="Quinaud M."/>
            <person name="Ple S."/>
            <person name="Job V."/>
            <person name="Contreras-Martel C."/>
            <person name="Simorre J.P."/>
            <person name="Attree I."/>
            <person name="Dessen A."/>
        </authorList>
    </citation>
    <scope>X-RAY CRYSTALLOGRAPHY (2.00 ANGSTROMS)</scope>
    <scope>INTERACTION WITH PSCF/SCTF AND PSCG</scope>
</reference>
<comment type="function">
    <text evidence="2 3">Chaperone of the type III secretion system (T3SS), also called injectisome, which is used to inject bacterial effector proteins into eukaryotic host cells, facilitating the establishment and dissemination of infection. Along with PscG, prevents premature polymerization of the PscF/SctF needle protein within the cytoplasm (PubMed:20494986). Required for type III secretion needle assembly. Also required for cytotoxicity by influencing PscF/SctF levels.</text>
</comment>
<comment type="subunit">
    <text evidence="2 3">Forms a stable ternary complex with PscF/SctF and PscG within the cytoplasm. Co-stabilized by PscG.</text>
</comment>
<comment type="interaction">
    <interactant intactId="EBI-6411628">
        <id>Q9I317</id>
    </interactant>
    <interactant intactId="EBI-6411621">
        <id>P95435</id>
        <label>pscG</label>
    </interactant>
    <organismsDiffer>false</organismsDiffer>
    <experiments>3</experiments>
</comment>
<comment type="subcellular location">
    <subcellularLocation>
        <location evidence="2">Cytoplasm</location>
    </subcellularLocation>
</comment>
<comment type="disruption phenotype">
    <text evidence="3">Deletion mutant looses the capacity to lyse macrophages, indicating the absence of a functional T3SS.</text>
</comment>
<comment type="similarity">
    <text evidence="4">Belongs to the YscE family.</text>
</comment>
<dbReference type="EMBL" id="U56077">
    <property type="protein sequence ID" value="AAC44776.1"/>
    <property type="molecule type" value="Genomic_DNA"/>
</dbReference>
<dbReference type="EMBL" id="AE004091">
    <property type="protein sequence ID" value="AAG05107.1"/>
    <property type="molecule type" value="Genomic_DNA"/>
</dbReference>
<dbReference type="PIR" id="F83430">
    <property type="entry name" value="F83430"/>
</dbReference>
<dbReference type="RefSeq" id="NP_250409.1">
    <property type="nucleotide sequence ID" value="NC_002516.2"/>
</dbReference>
<dbReference type="RefSeq" id="WP_003115377.1">
    <property type="nucleotide sequence ID" value="NZ_QZGE01000003.1"/>
</dbReference>
<dbReference type="PDB" id="2UWJ">
    <property type="method" value="X-ray"/>
    <property type="resolution" value="2.00 A"/>
    <property type="chains" value="E=1-67"/>
</dbReference>
<dbReference type="PDBsum" id="2UWJ"/>
<dbReference type="SMR" id="Q9I317"/>
<dbReference type="DIP" id="DIP-60933N"/>
<dbReference type="IntAct" id="Q9I317">
    <property type="interactions" value="2"/>
</dbReference>
<dbReference type="STRING" id="208964.PA1718"/>
<dbReference type="PaxDb" id="208964-PA1718"/>
<dbReference type="DNASU" id="881908"/>
<dbReference type="GeneID" id="881908"/>
<dbReference type="KEGG" id="pae:PA1718"/>
<dbReference type="PseudoCAP" id="PA1718"/>
<dbReference type="HOGENOM" id="CLU_202959_0_0_6"/>
<dbReference type="InParanoid" id="Q9I317"/>
<dbReference type="BioCyc" id="PAER208964:G1FZ6-1749-MONOMER"/>
<dbReference type="EvolutionaryTrace" id="Q9I317"/>
<dbReference type="Proteomes" id="UP000002438">
    <property type="component" value="Chromosome"/>
</dbReference>
<dbReference type="GO" id="GO:0005737">
    <property type="term" value="C:cytoplasm"/>
    <property type="evidence" value="ECO:0007669"/>
    <property type="project" value="UniProtKB-SubCell"/>
</dbReference>
<dbReference type="GO" id="GO:0030254">
    <property type="term" value="P:protein secretion by the type III secretion system"/>
    <property type="evidence" value="ECO:0000317"/>
    <property type="project" value="PseudoCAP"/>
</dbReference>
<dbReference type="Gene3D" id="1.20.5.420">
    <property type="entry name" value="Immunoglobulin FC, subunit C"/>
    <property type="match status" value="1"/>
</dbReference>
<dbReference type="InterPro" id="IPR012671">
    <property type="entry name" value="T3SS_PscE/YscE"/>
</dbReference>
<dbReference type="NCBIfam" id="TIGR02501">
    <property type="entry name" value="type_III_yscE"/>
    <property type="match status" value="1"/>
</dbReference>
<dbReference type="Pfam" id="PF08988">
    <property type="entry name" value="T3SS_needle_E"/>
    <property type="match status" value="1"/>
</dbReference>
<evidence type="ECO:0000255" key="1"/>
<evidence type="ECO:0000269" key="2">
    <source>
    </source>
</evidence>
<evidence type="ECO:0000269" key="3">
    <source>
    </source>
</evidence>
<evidence type="ECO:0000305" key="4"/>
<evidence type="ECO:0007744" key="5">
    <source>
        <dbReference type="PDB" id="2UWJ"/>
    </source>
</evidence>
<evidence type="ECO:0007829" key="6">
    <source>
        <dbReference type="PDB" id="2UWJ"/>
    </source>
</evidence>
<sequence>MMTALETRLSVADGTHAAALRQRLQAALAECRRELARGACPEHFQFLQQQARALEGGLGILSQLTED</sequence>
<organism>
    <name type="scientific">Pseudomonas aeruginosa (strain ATCC 15692 / DSM 22644 / CIP 104116 / JCM 14847 / LMG 12228 / 1C / PRS 101 / PAO1)</name>
    <dbReference type="NCBI Taxonomy" id="208964"/>
    <lineage>
        <taxon>Bacteria</taxon>
        <taxon>Pseudomonadati</taxon>
        <taxon>Pseudomonadota</taxon>
        <taxon>Gammaproteobacteria</taxon>
        <taxon>Pseudomonadales</taxon>
        <taxon>Pseudomonadaceae</taxon>
        <taxon>Pseudomonas</taxon>
    </lineage>
</organism>
<gene>
    <name type="primary">pscE</name>
    <name type="ordered locus">PA1718</name>
</gene>
<feature type="chain" id="PRO_0000250212" description="Type 3 secretion system chaperone PscE">
    <location>
        <begin position="1"/>
        <end position="67"/>
    </location>
</feature>
<feature type="coiled-coil region" evidence="1">
    <location>
        <begin position="16"/>
        <end position="37"/>
    </location>
</feature>
<feature type="sequence variant" description="In strain: 388.">
    <original>C</original>
    <variation>G</variation>
    <location>
        <position position="40"/>
    </location>
</feature>
<feature type="sequence variant" description="In strain: 388.">
    <original>H</original>
    <variation>R</variation>
    <location>
        <position position="43"/>
    </location>
</feature>
<feature type="mutagenesis site" description="About 50% loss of ability to lyse macrophages; when associated with S-24." evidence="3">
    <original>L</original>
    <variation>S</variation>
    <location>
        <position position="20"/>
    </location>
</feature>
<feature type="mutagenesis site" description="About 50% loss of ability to lyse macrophages; when associated with S-20." evidence="3">
    <original>L</original>
    <variation>S</variation>
    <location>
        <position position="24"/>
    </location>
</feature>
<feature type="mutagenesis site" description="Complete loss of ability to lyse macrophages." evidence="3">
    <original>G</original>
    <variation>D</variation>
    <location>
        <position position="57"/>
    </location>
</feature>
<feature type="helix" evidence="6">
    <location>
        <begin position="4"/>
        <end position="9"/>
    </location>
</feature>
<feature type="strand" evidence="6">
    <location>
        <begin position="11"/>
        <end position="13"/>
    </location>
</feature>
<feature type="helix" evidence="6">
    <location>
        <begin position="15"/>
        <end position="37"/>
    </location>
</feature>
<feature type="helix" evidence="6">
    <location>
        <begin position="41"/>
        <end position="65"/>
    </location>
</feature>
<accession>Q9I317</accession>
<accession>P95433</accession>
<protein>
    <recommendedName>
        <fullName evidence="4">Type 3 secretion system chaperone PscE</fullName>
    </recommendedName>
    <alternativeName>
        <fullName>Pseudomonas secretion protein E</fullName>
    </alternativeName>
    <alternativeName>
        <fullName>Type III export protein PscE</fullName>
    </alternativeName>
</protein>
<proteinExistence type="evidence at protein level"/>